<keyword id="KW-0574">Periplasm</keyword>
<keyword id="KW-1185">Reference proteome</keyword>
<keyword id="KW-0732">Signal</keyword>
<protein>
    <recommendedName>
        <fullName>Uncharacterized protein YbiJ</fullName>
    </recommendedName>
</protein>
<name>YBIJ_ECOLI</name>
<evidence type="ECO:0000255" key="1"/>
<evidence type="ECO:0000305" key="2"/>
<organism>
    <name type="scientific">Escherichia coli (strain K12)</name>
    <dbReference type="NCBI Taxonomy" id="83333"/>
    <lineage>
        <taxon>Bacteria</taxon>
        <taxon>Pseudomonadati</taxon>
        <taxon>Pseudomonadota</taxon>
        <taxon>Gammaproteobacteria</taxon>
        <taxon>Enterobacterales</taxon>
        <taxon>Enterobacteriaceae</taxon>
        <taxon>Escherichia</taxon>
    </lineage>
</organism>
<accession>P0AAX3</accession>
<accession>P41038</accession>
<feature type="signal peptide" evidence="1">
    <location>
        <begin position="1"/>
        <end position="22"/>
    </location>
</feature>
<feature type="chain" id="PRO_0000013812" description="Uncharacterized protein YbiJ">
    <location>
        <begin position="23"/>
        <end position="86"/>
    </location>
</feature>
<proteinExistence type="inferred from homology"/>
<reference key="1">
    <citation type="journal article" date="1994" name="Jpn. J. Genet.">
        <title>Structural analysis of the rhlE gene of Escherichia coli.</title>
        <authorList>
            <person name="Ohmori H."/>
        </authorList>
    </citation>
    <scope>NUCLEOTIDE SEQUENCE [GENOMIC DNA]</scope>
    <source>
        <strain>K12 / W3110 / ATCC 27325 / DSM 5911</strain>
    </source>
</reference>
<reference key="2">
    <citation type="journal article" date="1996" name="DNA Res.">
        <title>A 718-kb DNA sequence of the Escherichia coli K-12 genome corresponding to the 12.7-28.0 min region on the linkage map.</title>
        <authorList>
            <person name="Oshima T."/>
            <person name="Aiba H."/>
            <person name="Baba T."/>
            <person name="Fujita K."/>
            <person name="Hayashi K."/>
            <person name="Honjo A."/>
            <person name="Ikemoto K."/>
            <person name="Inada T."/>
            <person name="Itoh T."/>
            <person name="Kajihara M."/>
            <person name="Kanai K."/>
            <person name="Kashimoto K."/>
            <person name="Kimura S."/>
            <person name="Kitagawa M."/>
            <person name="Makino K."/>
            <person name="Masuda S."/>
            <person name="Miki T."/>
            <person name="Mizobuchi K."/>
            <person name="Mori H."/>
            <person name="Motomura K."/>
            <person name="Nakamura Y."/>
            <person name="Nashimoto H."/>
            <person name="Nishio Y."/>
            <person name="Saito N."/>
            <person name="Sampei G."/>
            <person name="Seki Y."/>
            <person name="Tagami H."/>
            <person name="Takemoto K."/>
            <person name="Wada C."/>
            <person name="Yamamoto Y."/>
            <person name="Yano M."/>
            <person name="Horiuchi T."/>
        </authorList>
    </citation>
    <scope>NUCLEOTIDE SEQUENCE [LARGE SCALE GENOMIC DNA]</scope>
    <source>
        <strain>K12 / W3110 / ATCC 27325 / DSM 5911</strain>
    </source>
</reference>
<reference key="3">
    <citation type="journal article" date="1997" name="Science">
        <title>The complete genome sequence of Escherichia coli K-12.</title>
        <authorList>
            <person name="Blattner F.R."/>
            <person name="Plunkett G. III"/>
            <person name="Bloch C.A."/>
            <person name="Perna N.T."/>
            <person name="Burland V."/>
            <person name="Riley M."/>
            <person name="Collado-Vides J."/>
            <person name="Glasner J.D."/>
            <person name="Rode C.K."/>
            <person name="Mayhew G.F."/>
            <person name="Gregor J."/>
            <person name="Davis N.W."/>
            <person name="Kirkpatrick H.A."/>
            <person name="Goeden M.A."/>
            <person name="Rose D.J."/>
            <person name="Mau B."/>
            <person name="Shao Y."/>
        </authorList>
    </citation>
    <scope>NUCLEOTIDE SEQUENCE [LARGE SCALE GENOMIC DNA]</scope>
    <source>
        <strain>K12 / MG1655 / ATCC 47076</strain>
    </source>
</reference>
<reference key="4">
    <citation type="journal article" date="2006" name="Mol. Syst. Biol.">
        <title>Highly accurate genome sequences of Escherichia coli K-12 strains MG1655 and W3110.</title>
        <authorList>
            <person name="Hayashi K."/>
            <person name="Morooka N."/>
            <person name="Yamamoto Y."/>
            <person name="Fujita K."/>
            <person name="Isono K."/>
            <person name="Choi S."/>
            <person name="Ohtsubo E."/>
            <person name="Baba T."/>
            <person name="Wanner B.L."/>
            <person name="Mori H."/>
            <person name="Horiuchi T."/>
        </authorList>
    </citation>
    <scope>NUCLEOTIDE SEQUENCE [LARGE SCALE GENOMIC DNA]</scope>
    <source>
        <strain>K12 / W3110 / ATCC 27325 / DSM 5911</strain>
    </source>
</reference>
<comment type="subcellular location">
    <subcellularLocation>
        <location evidence="2">Periplasm</location>
    </subcellularLocation>
</comment>
<comment type="similarity">
    <text evidence="2">Belongs to the BhsA/McbA family.</text>
</comment>
<gene>
    <name type="primary">ybiJ</name>
    <name type="ordered locus">b0802</name>
    <name type="ordered locus">JW0787</name>
</gene>
<dbReference type="EMBL" id="L02123">
    <property type="status" value="NOT_ANNOTATED_CDS"/>
    <property type="molecule type" value="Genomic_DNA"/>
</dbReference>
<dbReference type="EMBL" id="U00096">
    <property type="protein sequence ID" value="AAC73889.1"/>
    <property type="molecule type" value="Genomic_DNA"/>
</dbReference>
<dbReference type="EMBL" id="AP009048">
    <property type="protein sequence ID" value="BAA35468.1"/>
    <property type="molecule type" value="Genomic_DNA"/>
</dbReference>
<dbReference type="PIR" id="B64817">
    <property type="entry name" value="B64817"/>
</dbReference>
<dbReference type="RefSeq" id="NP_415323.1">
    <property type="nucleotide sequence ID" value="NC_000913.3"/>
</dbReference>
<dbReference type="RefSeq" id="WP_000849301.1">
    <property type="nucleotide sequence ID" value="NZ_STEB01000019.1"/>
</dbReference>
<dbReference type="SMR" id="P0AAX3"/>
<dbReference type="BioGRID" id="4259967">
    <property type="interactions" value="17"/>
</dbReference>
<dbReference type="FunCoup" id="P0AAX3">
    <property type="interactions" value="32"/>
</dbReference>
<dbReference type="STRING" id="511145.b0802"/>
<dbReference type="jPOST" id="P0AAX3"/>
<dbReference type="PaxDb" id="511145-b0802"/>
<dbReference type="EnsemblBacteria" id="AAC73889">
    <property type="protein sequence ID" value="AAC73889"/>
    <property type="gene ID" value="b0802"/>
</dbReference>
<dbReference type="GeneID" id="89520181"/>
<dbReference type="GeneID" id="945433"/>
<dbReference type="KEGG" id="ecj:JW0787"/>
<dbReference type="KEGG" id="eco:b0802"/>
<dbReference type="KEGG" id="ecoc:C3026_05060"/>
<dbReference type="PATRIC" id="fig|511145.12.peg.829"/>
<dbReference type="EchoBASE" id="EB2321"/>
<dbReference type="eggNOG" id="ENOG5032ZBU">
    <property type="taxonomic scope" value="Bacteria"/>
</dbReference>
<dbReference type="HOGENOM" id="CLU_158602_2_2_6"/>
<dbReference type="InParanoid" id="P0AAX3"/>
<dbReference type="OMA" id="LMHATAV"/>
<dbReference type="OrthoDB" id="6428780at2"/>
<dbReference type="PhylomeDB" id="P0AAX3"/>
<dbReference type="BioCyc" id="EcoCyc:EG12422-MONOMER"/>
<dbReference type="PRO" id="PR:P0AAX3"/>
<dbReference type="Proteomes" id="UP000000625">
    <property type="component" value="Chromosome"/>
</dbReference>
<dbReference type="GO" id="GO:0042597">
    <property type="term" value="C:periplasmic space"/>
    <property type="evidence" value="ECO:0007669"/>
    <property type="project" value="UniProtKB-SubCell"/>
</dbReference>
<dbReference type="GO" id="GO:0006974">
    <property type="term" value="P:DNA damage response"/>
    <property type="evidence" value="ECO:0000270"/>
    <property type="project" value="EcoliWiki"/>
</dbReference>
<dbReference type="GO" id="GO:0006950">
    <property type="term" value="P:response to stress"/>
    <property type="evidence" value="ECO:0000318"/>
    <property type="project" value="GO_Central"/>
</dbReference>
<dbReference type="FunFam" id="3.30.1660.10:FF:000001">
    <property type="entry name" value="Multiple stress resistance protein BhsA"/>
    <property type="match status" value="1"/>
</dbReference>
<dbReference type="Gene3D" id="3.30.1660.10">
    <property type="entry name" value="Flavin-binding protein dodecin"/>
    <property type="match status" value="1"/>
</dbReference>
<dbReference type="InterPro" id="IPR051096">
    <property type="entry name" value="BhsA/McbA_stress_biofilm_assoc"/>
</dbReference>
<dbReference type="InterPro" id="IPR025543">
    <property type="entry name" value="Dodecin-like"/>
</dbReference>
<dbReference type="InterPro" id="IPR036275">
    <property type="entry name" value="YdgH-like_sf"/>
</dbReference>
<dbReference type="InterPro" id="IPR010854">
    <property type="entry name" value="YdgH/BhsA/McbA-like_dom"/>
</dbReference>
<dbReference type="NCBIfam" id="NF007611">
    <property type="entry name" value="PRK10259.1"/>
    <property type="match status" value="1"/>
</dbReference>
<dbReference type="NCBIfam" id="NF047859">
    <property type="entry name" value="StressCuResBhsA"/>
    <property type="match status" value="1"/>
</dbReference>
<dbReference type="PANTHER" id="PTHR34156">
    <property type="entry name" value="OUTER MEMBRANE PROTEIN-RELATED-RELATED"/>
    <property type="match status" value="1"/>
</dbReference>
<dbReference type="PANTHER" id="PTHR34156:SF1">
    <property type="entry name" value="PERIPLASMIC PROTEIN"/>
    <property type="match status" value="1"/>
</dbReference>
<dbReference type="Pfam" id="PF07338">
    <property type="entry name" value="YdgH_BhsA-like"/>
    <property type="match status" value="1"/>
</dbReference>
<dbReference type="SUPFAM" id="SSF159871">
    <property type="entry name" value="YdgH-like"/>
    <property type="match status" value="1"/>
</dbReference>
<sequence length="86" mass="8568">MKTINTVVAAMALSTLSFGVFAAEPVTASQAQNMNKIGVVSADGASTLDALEAKLAEKAAAAGASGYSITSATNNNKLSGTAVIYK</sequence>